<comment type="function">
    <text evidence="1 4">E2 conjugating enzyme required for the cytoplasm to vacuole transport (Cvt) and autophagy. Required for selective autophagic degradation of the nucleus (nucleophagy) as well as for mitophagy which contributes to regulate mitochondrial quantity and quality by eliminating the mitochondria to a basal level to fulfill cellular energy requirements and preventing excess ROS production. Responsible for the E2-like covalent binding of phosphatidylethanolamine to the C-terminal Gly of atg8. The atg12-atg5 conjugate plays a role of an E3 and promotes the transfer of atg8 from atg3 to phosphatidylethanolamine (PE). This step is required for the membrane association of atg8. The formation of the atg8-phosphatidylethanolamine conjugate is essential for autophagy and for the cytoplasm to vacuole transport (Cvt). The atg8-PE conjugate mediates tethering between adjacent membranes and stimulates membrane hemifusion, leading to expansion of the autophagosomal membrane during autophagy (By similarity). Plays a role in meiosis and sporulation.</text>
</comment>
<comment type="subunit">
    <text evidence="1">Monomer. Interacts with atg8 through an intermediate thioester bond through the C-terminal Gly of atg8. Also interacts with the 40 amino acid C-terminal region of the E1-like atg7 enzyme. Also interacts with the atg12-atg5 conjugate.</text>
</comment>
<comment type="subcellular location">
    <subcellularLocation>
        <location evidence="3">Cytoplasm</location>
    </subcellularLocation>
    <subcellularLocation>
        <location evidence="3">Nucleus</location>
    </subcellularLocation>
</comment>
<comment type="domain">
    <text evidence="1">The N-terminal region is involved in phosphatidylethanolamine-binding and is required for atg8-PE conjugation.</text>
</comment>
<comment type="domain">
    <text evidence="1">The flexible region (FR) is required for atg7-binding.</text>
</comment>
<comment type="domain">
    <text evidence="1">The handle region (HR) contains the atg8 interaction motif (AIM) and mediates binding to atg8. It is crucial for the cytoplasm-to-vacuole targeting pathway (By similarity).</text>
</comment>
<comment type="disruption phenotype">
    <text evidence="5">Impairs atg8-processing.</text>
</comment>
<comment type="similarity">
    <text evidence="6">Belongs to the ATG3 family.</text>
</comment>
<proteinExistence type="inferred from homology"/>
<organism>
    <name type="scientific">Schizosaccharomyces pombe (strain 972 / ATCC 24843)</name>
    <name type="common">Fission yeast</name>
    <dbReference type="NCBI Taxonomy" id="284812"/>
    <lineage>
        <taxon>Eukaryota</taxon>
        <taxon>Fungi</taxon>
        <taxon>Dikarya</taxon>
        <taxon>Ascomycota</taxon>
        <taxon>Taphrinomycotina</taxon>
        <taxon>Schizosaccharomycetes</taxon>
        <taxon>Schizosaccharomycetales</taxon>
        <taxon>Schizosaccharomycetaceae</taxon>
        <taxon>Schizosaccharomyces</taxon>
    </lineage>
</organism>
<dbReference type="EMBL" id="CU329671">
    <property type="protein sequence ID" value="CAA17786.1"/>
    <property type="molecule type" value="Genomic_DNA"/>
</dbReference>
<dbReference type="PIR" id="T40345">
    <property type="entry name" value="T40345"/>
</dbReference>
<dbReference type="RefSeq" id="NP_596664.1">
    <property type="nucleotide sequence ID" value="NM_001022586.2"/>
</dbReference>
<dbReference type="SMR" id="O43035"/>
<dbReference type="BioGRID" id="277540">
    <property type="interactions" value="5"/>
</dbReference>
<dbReference type="FunCoup" id="O43035">
    <property type="interactions" value="739"/>
</dbReference>
<dbReference type="STRING" id="284812.O43035"/>
<dbReference type="iPTMnet" id="O43035"/>
<dbReference type="PaxDb" id="4896-SPBC3B9.06c.1"/>
<dbReference type="EnsemblFungi" id="SPBC3B9.06c.1">
    <property type="protein sequence ID" value="SPBC3B9.06c.1:pep"/>
    <property type="gene ID" value="SPBC3B9.06c"/>
</dbReference>
<dbReference type="GeneID" id="2541025"/>
<dbReference type="KEGG" id="spo:2541025"/>
<dbReference type="PomBase" id="SPBC3B9.06c">
    <property type="gene designation" value="atg3"/>
</dbReference>
<dbReference type="VEuPathDB" id="FungiDB:SPBC3B9.06c"/>
<dbReference type="eggNOG" id="KOG2981">
    <property type="taxonomic scope" value="Eukaryota"/>
</dbReference>
<dbReference type="HOGENOM" id="CLU_027518_2_0_1"/>
<dbReference type="InParanoid" id="O43035"/>
<dbReference type="OMA" id="KWCKAIS"/>
<dbReference type="PhylomeDB" id="O43035"/>
<dbReference type="Reactome" id="R-SPO-1632852">
    <property type="pathway name" value="Macroautophagy"/>
</dbReference>
<dbReference type="PRO" id="PR:O43035"/>
<dbReference type="Proteomes" id="UP000002485">
    <property type="component" value="Chromosome II"/>
</dbReference>
<dbReference type="GO" id="GO:0005829">
    <property type="term" value="C:cytosol"/>
    <property type="evidence" value="ECO:0007005"/>
    <property type="project" value="PomBase"/>
</dbReference>
<dbReference type="GO" id="GO:0005634">
    <property type="term" value="C:nucleus"/>
    <property type="evidence" value="ECO:0007005"/>
    <property type="project" value="PomBase"/>
</dbReference>
<dbReference type="GO" id="GO:0000407">
    <property type="term" value="C:phagophore assembly site"/>
    <property type="evidence" value="ECO:0000318"/>
    <property type="project" value="GO_Central"/>
</dbReference>
<dbReference type="GO" id="GO:0141046">
    <property type="term" value="F:Atg8-family conjugating enzyme activity"/>
    <property type="evidence" value="ECO:0000318"/>
    <property type="project" value="GO_Central"/>
</dbReference>
<dbReference type="GO" id="GO:0000045">
    <property type="term" value="P:autophagosome assembly"/>
    <property type="evidence" value="ECO:0000318"/>
    <property type="project" value="GO_Central"/>
</dbReference>
<dbReference type="GO" id="GO:0000422">
    <property type="term" value="P:autophagy of mitochondrion"/>
    <property type="evidence" value="ECO:0000318"/>
    <property type="project" value="GO_Central"/>
</dbReference>
<dbReference type="GO" id="GO:0061723">
    <property type="term" value="P:glycophagy"/>
    <property type="evidence" value="ECO:0000318"/>
    <property type="project" value="GO_Central"/>
</dbReference>
<dbReference type="GO" id="GO:0016236">
    <property type="term" value="P:macroautophagy"/>
    <property type="evidence" value="ECO:0000315"/>
    <property type="project" value="PomBase"/>
</dbReference>
<dbReference type="GO" id="GO:0044804">
    <property type="term" value="P:nucleophagy"/>
    <property type="evidence" value="ECO:0000318"/>
    <property type="project" value="GO_Central"/>
</dbReference>
<dbReference type="GO" id="GO:0015031">
    <property type="term" value="P:protein transport"/>
    <property type="evidence" value="ECO:0007669"/>
    <property type="project" value="UniProtKB-KW"/>
</dbReference>
<dbReference type="Gene3D" id="3.30.1460.50">
    <property type="match status" value="1"/>
</dbReference>
<dbReference type="InterPro" id="IPR007135">
    <property type="entry name" value="Atg3/Atg10"/>
</dbReference>
<dbReference type="PANTHER" id="PTHR12866">
    <property type="entry name" value="UBIQUITIN-LIKE-CONJUGATING ENZYME ATG3"/>
    <property type="match status" value="1"/>
</dbReference>
<dbReference type="PANTHER" id="PTHR12866:SF2">
    <property type="entry name" value="UBIQUITIN-LIKE-CONJUGATING ENZYME ATG3"/>
    <property type="match status" value="1"/>
</dbReference>
<dbReference type="Pfam" id="PF03987">
    <property type="entry name" value="Autophagy_act_C"/>
    <property type="match status" value="1"/>
</dbReference>
<evidence type="ECO:0000250" key="1"/>
<evidence type="ECO:0000256" key="2">
    <source>
        <dbReference type="SAM" id="MobiDB-lite"/>
    </source>
</evidence>
<evidence type="ECO:0000269" key="3">
    <source>
    </source>
</evidence>
<evidence type="ECO:0000269" key="4">
    <source>
    </source>
</evidence>
<evidence type="ECO:0000269" key="5">
    <source>
    </source>
</evidence>
<evidence type="ECO:0000305" key="6"/>
<feature type="chain" id="PRO_0000213584" description="Autophagy-related protein 3">
    <location>
        <begin position="1"/>
        <end position="275"/>
    </location>
</feature>
<feature type="region of interest" description="Flexible region" evidence="1">
    <location>
        <begin position="83"/>
        <end position="156"/>
    </location>
</feature>
<feature type="region of interest" description="Disordered" evidence="2">
    <location>
        <begin position="123"/>
        <end position="149"/>
    </location>
</feature>
<feature type="region of interest" description="Handle region" evidence="1">
    <location>
        <begin position="231"/>
        <end position="251"/>
    </location>
</feature>
<feature type="compositionally biased region" description="Basic and acidic residues" evidence="2">
    <location>
        <begin position="123"/>
        <end position="133"/>
    </location>
</feature>
<feature type="active site" description="Glycyl thioester intermediate" evidence="1">
    <location>
        <position position="227"/>
    </location>
</feature>
<feature type="binding site" evidence="1">
    <location>
        <begin position="1"/>
        <end position="10"/>
    </location>
    <ligand>
        <name>a 1,2-diacylglycero-3-phosphoethanolamine</name>
        <dbReference type="ChEBI" id="CHEBI:57613"/>
    </ligand>
</feature>
<name>ATG3_SCHPO</name>
<sequence length="275" mass="31886">MAQRLTSAFLNWREHITPASKTSDFENTGMISPEEFVLAGDYLVSKFPTWSWECGDRIRGFLPKDKQYLVTRHVFCVQRNINIGVNEEWVDIETDDTRNKDDDQDDDAISSIHSDTSDIASAERLKGQSKELSDSGPLPLKDEEDDDQMVSPVIKEDEGRYYDLYIVYDKYYRTPRLFLRGWNAGGQLLTMKDIYEDVSGEHAGKTVTMEPFPHYHSHNTMASVHPCKHASVLLKLIKQHRERNDPIRVDQYMVLFLKFVSTMLPYFEIDYTIQA</sequence>
<accession>O43035</accession>
<reference key="1">
    <citation type="journal article" date="2002" name="Nature">
        <title>The genome sequence of Schizosaccharomyces pombe.</title>
        <authorList>
            <person name="Wood V."/>
            <person name="Gwilliam R."/>
            <person name="Rajandream M.A."/>
            <person name="Lyne M.H."/>
            <person name="Lyne R."/>
            <person name="Stewart A."/>
            <person name="Sgouros J.G."/>
            <person name="Peat N."/>
            <person name="Hayles J."/>
            <person name="Baker S.G."/>
            <person name="Basham D."/>
            <person name="Bowman S."/>
            <person name="Brooks K."/>
            <person name="Brown D."/>
            <person name="Brown S."/>
            <person name="Chillingworth T."/>
            <person name="Churcher C.M."/>
            <person name="Collins M."/>
            <person name="Connor R."/>
            <person name="Cronin A."/>
            <person name="Davis P."/>
            <person name="Feltwell T."/>
            <person name="Fraser A."/>
            <person name="Gentles S."/>
            <person name="Goble A."/>
            <person name="Hamlin N."/>
            <person name="Harris D.E."/>
            <person name="Hidalgo J."/>
            <person name="Hodgson G."/>
            <person name="Holroyd S."/>
            <person name="Hornsby T."/>
            <person name="Howarth S."/>
            <person name="Huckle E.J."/>
            <person name="Hunt S."/>
            <person name="Jagels K."/>
            <person name="James K.D."/>
            <person name="Jones L."/>
            <person name="Jones M."/>
            <person name="Leather S."/>
            <person name="McDonald S."/>
            <person name="McLean J."/>
            <person name="Mooney P."/>
            <person name="Moule S."/>
            <person name="Mungall K.L."/>
            <person name="Murphy L.D."/>
            <person name="Niblett D."/>
            <person name="Odell C."/>
            <person name="Oliver K."/>
            <person name="O'Neil S."/>
            <person name="Pearson D."/>
            <person name="Quail M.A."/>
            <person name="Rabbinowitsch E."/>
            <person name="Rutherford K.M."/>
            <person name="Rutter S."/>
            <person name="Saunders D."/>
            <person name="Seeger K."/>
            <person name="Sharp S."/>
            <person name="Skelton J."/>
            <person name="Simmonds M.N."/>
            <person name="Squares R."/>
            <person name="Squares S."/>
            <person name="Stevens K."/>
            <person name="Taylor K."/>
            <person name="Taylor R.G."/>
            <person name="Tivey A."/>
            <person name="Walsh S.V."/>
            <person name="Warren T."/>
            <person name="Whitehead S."/>
            <person name="Woodward J.R."/>
            <person name="Volckaert G."/>
            <person name="Aert R."/>
            <person name="Robben J."/>
            <person name="Grymonprez B."/>
            <person name="Weltjens I."/>
            <person name="Vanstreels E."/>
            <person name="Rieger M."/>
            <person name="Schaefer M."/>
            <person name="Mueller-Auer S."/>
            <person name="Gabel C."/>
            <person name="Fuchs M."/>
            <person name="Duesterhoeft A."/>
            <person name="Fritzc C."/>
            <person name="Holzer E."/>
            <person name="Moestl D."/>
            <person name="Hilbert H."/>
            <person name="Borzym K."/>
            <person name="Langer I."/>
            <person name="Beck A."/>
            <person name="Lehrach H."/>
            <person name="Reinhardt R."/>
            <person name="Pohl T.M."/>
            <person name="Eger P."/>
            <person name="Zimmermann W."/>
            <person name="Wedler H."/>
            <person name="Wambutt R."/>
            <person name="Purnelle B."/>
            <person name="Goffeau A."/>
            <person name="Cadieu E."/>
            <person name="Dreano S."/>
            <person name="Gloux S."/>
            <person name="Lelaure V."/>
            <person name="Mottier S."/>
            <person name="Galibert F."/>
            <person name="Aves S.J."/>
            <person name="Xiang Z."/>
            <person name="Hunt C."/>
            <person name="Moore K."/>
            <person name="Hurst S.M."/>
            <person name="Lucas M."/>
            <person name="Rochet M."/>
            <person name="Gaillardin C."/>
            <person name="Tallada V.A."/>
            <person name="Garzon A."/>
            <person name="Thode G."/>
            <person name="Daga R.R."/>
            <person name="Cruzado L."/>
            <person name="Jimenez J."/>
            <person name="Sanchez M."/>
            <person name="del Rey F."/>
            <person name="Benito J."/>
            <person name="Dominguez A."/>
            <person name="Revuelta J.L."/>
            <person name="Moreno S."/>
            <person name="Armstrong J."/>
            <person name="Forsburg S.L."/>
            <person name="Cerutti L."/>
            <person name="Lowe T."/>
            <person name="McCombie W.R."/>
            <person name="Paulsen I."/>
            <person name="Potashkin J."/>
            <person name="Shpakovski G.V."/>
            <person name="Ussery D."/>
            <person name="Barrell B.G."/>
            <person name="Nurse P."/>
        </authorList>
    </citation>
    <scope>NUCLEOTIDE SEQUENCE [LARGE SCALE GENOMIC DNA]</scope>
    <source>
        <strain>972 / ATCC 24843</strain>
    </source>
</reference>
<reference key="2">
    <citation type="journal article" date="2006" name="Nat. Biotechnol.">
        <title>ORFeome cloning and global analysis of protein localization in the fission yeast Schizosaccharomyces pombe.</title>
        <authorList>
            <person name="Matsuyama A."/>
            <person name="Arai R."/>
            <person name="Yashiroda Y."/>
            <person name="Shirai A."/>
            <person name="Kamata A."/>
            <person name="Sekido S."/>
            <person name="Kobayashi Y."/>
            <person name="Hashimoto A."/>
            <person name="Hamamoto M."/>
            <person name="Hiraoka Y."/>
            <person name="Horinouchi S."/>
            <person name="Yoshida M."/>
        </authorList>
    </citation>
    <scope>SUBCELLULAR LOCATION [LARGE SCALE ANALYSIS]</scope>
</reference>
<reference key="3">
    <citation type="journal article" date="2009" name="Microbiology">
        <title>Autophagy-deficient Schizosaccharomyces pombe mutants undergo partial sporulation during nitrogen starvation.</title>
        <authorList>
            <person name="Mukaiyama H."/>
            <person name="Kajiwara S."/>
            <person name="Hosomi A."/>
            <person name="Giga-Hama Y."/>
            <person name="Tanaka N."/>
            <person name="Nakamura T."/>
            <person name="Takegawa K."/>
        </authorList>
    </citation>
    <scope>FUNCTION</scope>
</reference>
<reference key="4">
    <citation type="journal article" date="2013" name="PLoS Genet.">
        <title>Global analysis of fission yeast mating genes reveals new autophagy factors.</title>
        <authorList>
            <person name="Sun L.L."/>
            <person name="Li M."/>
            <person name="Suo F."/>
            <person name="Liu X.M."/>
            <person name="Shen E.Z."/>
            <person name="Yang B."/>
            <person name="Dong M.Q."/>
            <person name="He W.Z."/>
            <person name="Du L.L."/>
        </authorList>
    </citation>
    <scope>DISRUPTION PHENOTYPE</scope>
</reference>
<protein>
    <recommendedName>
        <fullName>Autophagy-related protein 3</fullName>
    </recommendedName>
    <alternativeName>
        <fullName>Autophagy-related E2-like conjugation enzyme atg3</fullName>
    </alternativeName>
</protein>
<gene>
    <name type="primary">atg3</name>
    <name type="ORF">SPBC3B9.06c</name>
</gene>
<keyword id="KW-0072">Autophagy</keyword>
<keyword id="KW-0963">Cytoplasm</keyword>
<keyword id="KW-0539">Nucleus</keyword>
<keyword id="KW-0653">Protein transport</keyword>
<keyword id="KW-1185">Reference proteome</keyword>
<keyword id="KW-0813">Transport</keyword>
<keyword id="KW-0833">Ubl conjugation pathway</keyword>